<comment type="similarity">
    <text evidence="1">Belongs to the bacterial ribosomal protein bL32 family.</text>
</comment>
<sequence length="48" mass="5614">MAVPKRRVSKTRAAKRRTHYKVSLPMPVKDKDGSYKMPHRANPTTKEY</sequence>
<protein>
    <recommendedName>
        <fullName evidence="1">Large ribosomal subunit protein bL32</fullName>
    </recommendedName>
    <alternativeName>
        <fullName evidence="3">50S ribosomal protein L32</fullName>
    </alternativeName>
</protein>
<reference key="1">
    <citation type="submission" date="2007-07" db="EMBL/GenBank/DDBJ databases">
        <title>Complete genome sequence of Campylobacter jejuni subsp doylei 269.97 isolated from human blood.</title>
        <authorList>
            <person name="Fouts D.E."/>
            <person name="Mongodin E.F."/>
            <person name="Puiu D."/>
            <person name="Sebastian Y."/>
            <person name="Miller W.G."/>
            <person name="Mandrell R.E."/>
            <person name="Lastovica A.J."/>
            <person name="Nelson K.E."/>
        </authorList>
    </citation>
    <scope>NUCLEOTIDE SEQUENCE [LARGE SCALE GENOMIC DNA]</scope>
    <source>
        <strain>ATCC BAA-1458 / RM4099 / 269.97</strain>
    </source>
</reference>
<feature type="chain" id="PRO_1000005055" description="Large ribosomal subunit protein bL32">
    <location>
        <begin position="1"/>
        <end position="48"/>
    </location>
</feature>
<feature type="region of interest" description="Disordered" evidence="2">
    <location>
        <begin position="1"/>
        <end position="48"/>
    </location>
</feature>
<feature type="compositionally biased region" description="Basic residues" evidence="2">
    <location>
        <begin position="1"/>
        <end position="20"/>
    </location>
</feature>
<gene>
    <name evidence="1" type="primary">rpmF</name>
    <name type="ordered locus">JJD26997_1628</name>
</gene>
<name>RL32_CAMJD</name>
<dbReference type="EMBL" id="CP000768">
    <property type="protein sequence ID" value="ABS44729.1"/>
    <property type="molecule type" value="Genomic_DNA"/>
</dbReference>
<dbReference type="SMR" id="A7H539"/>
<dbReference type="KEGG" id="cjd:JJD26997_1628"/>
<dbReference type="HOGENOM" id="CLU_129084_1_2_7"/>
<dbReference type="Proteomes" id="UP000002302">
    <property type="component" value="Chromosome"/>
</dbReference>
<dbReference type="GO" id="GO:0015934">
    <property type="term" value="C:large ribosomal subunit"/>
    <property type="evidence" value="ECO:0007669"/>
    <property type="project" value="InterPro"/>
</dbReference>
<dbReference type="GO" id="GO:0003735">
    <property type="term" value="F:structural constituent of ribosome"/>
    <property type="evidence" value="ECO:0007669"/>
    <property type="project" value="InterPro"/>
</dbReference>
<dbReference type="GO" id="GO:0006412">
    <property type="term" value="P:translation"/>
    <property type="evidence" value="ECO:0007669"/>
    <property type="project" value="UniProtKB-UniRule"/>
</dbReference>
<dbReference type="HAMAP" id="MF_00340">
    <property type="entry name" value="Ribosomal_bL32"/>
    <property type="match status" value="1"/>
</dbReference>
<dbReference type="InterPro" id="IPR002677">
    <property type="entry name" value="Ribosomal_bL32"/>
</dbReference>
<dbReference type="InterPro" id="IPR011332">
    <property type="entry name" value="Ribosomal_zn-bd"/>
</dbReference>
<dbReference type="NCBIfam" id="TIGR01031">
    <property type="entry name" value="rpmF_bact"/>
    <property type="match status" value="1"/>
</dbReference>
<dbReference type="Pfam" id="PF01783">
    <property type="entry name" value="Ribosomal_L32p"/>
    <property type="match status" value="1"/>
</dbReference>
<dbReference type="SUPFAM" id="SSF57829">
    <property type="entry name" value="Zn-binding ribosomal proteins"/>
    <property type="match status" value="1"/>
</dbReference>
<organism>
    <name type="scientific">Campylobacter jejuni subsp. doylei (strain ATCC BAA-1458 / RM4099 / 269.97)</name>
    <dbReference type="NCBI Taxonomy" id="360109"/>
    <lineage>
        <taxon>Bacteria</taxon>
        <taxon>Pseudomonadati</taxon>
        <taxon>Campylobacterota</taxon>
        <taxon>Epsilonproteobacteria</taxon>
        <taxon>Campylobacterales</taxon>
        <taxon>Campylobacteraceae</taxon>
        <taxon>Campylobacter</taxon>
    </lineage>
</organism>
<accession>A7H539</accession>
<keyword id="KW-0687">Ribonucleoprotein</keyword>
<keyword id="KW-0689">Ribosomal protein</keyword>
<evidence type="ECO:0000255" key="1">
    <source>
        <dbReference type="HAMAP-Rule" id="MF_00340"/>
    </source>
</evidence>
<evidence type="ECO:0000256" key="2">
    <source>
        <dbReference type="SAM" id="MobiDB-lite"/>
    </source>
</evidence>
<evidence type="ECO:0000305" key="3"/>
<proteinExistence type="inferred from homology"/>